<feature type="chain" id="PRO_1000048807" description="tRNA modification GTPase MnmE">
    <location>
        <begin position="1"/>
        <end position="464"/>
    </location>
</feature>
<feature type="domain" description="TrmE-type G">
    <location>
        <begin position="222"/>
        <end position="384"/>
    </location>
</feature>
<feature type="binding site" evidence="1">
    <location>
        <position position="27"/>
    </location>
    <ligand>
        <name>(6S)-5-formyl-5,6,7,8-tetrahydrofolate</name>
        <dbReference type="ChEBI" id="CHEBI:57457"/>
    </ligand>
</feature>
<feature type="binding site" evidence="1">
    <location>
        <position position="90"/>
    </location>
    <ligand>
        <name>(6S)-5-formyl-5,6,7,8-tetrahydrofolate</name>
        <dbReference type="ChEBI" id="CHEBI:57457"/>
    </ligand>
</feature>
<feature type="binding site" evidence="1">
    <location>
        <position position="129"/>
    </location>
    <ligand>
        <name>(6S)-5-formyl-5,6,7,8-tetrahydrofolate</name>
        <dbReference type="ChEBI" id="CHEBI:57457"/>
    </ligand>
</feature>
<feature type="binding site" evidence="1">
    <location>
        <begin position="232"/>
        <end position="237"/>
    </location>
    <ligand>
        <name>GTP</name>
        <dbReference type="ChEBI" id="CHEBI:37565"/>
    </ligand>
</feature>
<feature type="binding site" evidence="1">
    <location>
        <position position="236"/>
    </location>
    <ligand>
        <name>Mg(2+)</name>
        <dbReference type="ChEBI" id="CHEBI:18420"/>
    </ligand>
</feature>
<feature type="binding site" evidence="1">
    <location>
        <begin position="251"/>
        <end position="257"/>
    </location>
    <ligand>
        <name>GTP</name>
        <dbReference type="ChEBI" id="CHEBI:37565"/>
    </ligand>
</feature>
<feature type="binding site" evidence="1">
    <location>
        <position position="257"/>
    </location>
    <ligand>
        <name>Mg(2+)</name>
        <dbReference type="ChEBI" id="CHEBI:18420"/>
    </ligand>
</feature>
<feature type="binding site" evidence="1">
    <location>
        <begin position="276"/>
        <end position="279"/>
    </location>
    <ligand>
        <name>GTP</name>
        <dbReference type="ChEBI" id="CHEBI:37565"/>
    </ligand>
</feature>
<feature type="binding site" evidence="1">
    <location>
        <position position="464"/>
    </location>
    <ligand>
        <name>(6S)-5-formyl-5,6,7,8-tetrahydrofolate</name>
        <dbReference type="ChEBI" id="CHEBI:57457"/>
    </ligand>
</feature>
<organism>
    <name type="scientific">Borreliella afzelii (strain PKo)</name>
    <name type="common">Borrelia afzelii</name>
    <dbReference type="NCBI Taxonomy" id="390236"/>
    <lineage>
        <taxon>Bacteria</taxon>
        <taxon>Pseudomonadati</taxon>
        <taxon>Spirochaetota</taxon>
        <taxon>Spirochaetia</taxon>
        <taxon>Spirochaetales</taxon>
        <taxon>Borreliaceae</taxon>
        <taxon>Borreliella</taxon>
    </lineage>
</organism>
<sequence length="464" mass="51785">MSKLFERDDDIVALATPFLSSALCVIRSSGASSISKFSKIFSNHSALNSAAGNTIHYGYILDNENNCKVDEVVVCLYRAPKSFTGQDAVEVIAHGSVIGIKKIIDLFLKSGFRMAEPGEFTFRSFLAKKIDLTKAEAINEIIFAKTNKAYSLAVNKLSGALFVKIDTIKKCILNFLSAVSVYLDYEVDDREIDIPFDLILNSKVELKKLIDSYKVYEKIDHGITLVLAGSVNAGKSSLFNLFLKKDRSIVSSYPGTTRDYIEASFELDGILFNLFDTAGLRDADNFVERLGIEKSNSLIKEASLVIYVIDISSNLTRDDLLFIDSNKSNSKILFVLNKIDLKINKSTEEFVRSSVLNSSNLIMISIKNLEGIDILYDKIRTLISYERVEIGLDDIIISSSRQIQLLEKAYALILDLLSKIDRQVSYDMLAFDAYEIINCLGEITGEVSSEDVLDNMFKNFCLGK</sequence>
<name>MNME_BORAP</name>
<comment type="function">
    <text evidence="1">Exhibits a very high intrinsic GTPase hydrolysis rate. Involved in the addition of a carboxymethylaminomethyl (cmnm) group at the wobble position (U34) of certain tRNAs, forming tRNA-cmnm(5)s(2)U34.</text>
</comment>
<comment type="cofactor">
    <cofactor evidence="1">
        <name>K(+)</name>
        <dbReference type="ChEBI" id="CHEBI:29103"/>
    </cofactor>
    <text evidence="1">Binds 1 potassium ion per subunit.</text>
</comment>
<comment type="subunit">
    <text evidence="1">Homodimer. Heterotetramer of two MnmE and two MnmG subunits.</text>
</comment>
<comment type="subcellular location">
    <subcellularLocation>
        <location evidence="1">Cytoplasm</location>
    </subcellularLocation>
</comment>
<comment type="similarity">
    <text evidence="1">Belongs to the TRAFAC class TrmE-Era-EngA-EngB-Septin-like GTPase superfamily. TrmE GTPase family.</text>
</comment>
<dbReference type="EC" id="3.6.-.-" evidence="1"/>
<dbReference type="EMBL" id="CP000395">
    <property type="protein sequence ID" value="ABH01443.1"/>
    <property type="molecule type" value="Genomic_DNA"/>
</dbReference>
<dbReference type="EMBL" id="CP002933">
    <property type="protein sequence ID" value="AEL69409.1"/>
    <property type="molecule type" value="Genomic_DNA"/>
</dbReference>
<dbReference type="RefSeq" id="WP_011600873.1">
    <property type="nucleotide sequence ID" value="NC_008277.1"/>
</dbReference>
<dbReference type="SMR" id="Q0SNY5"/>
<dbReference type="STRING" id="29518.BLA32_03415"/>
<dbReference type="KEGG" id="baf:BAPKO_0181"/>
<dbReference type="KEGG" id="bafz:BafPKo_0176"/>
<dbReference type="PATRIC" id="fig|390236.22.peg.174"/>
<dbReference type="eggNOG" id="COG0486">
    <property type="taxonomic scope" value="Bacteria"/>
</dbReference>
<dbReference type="HOGENOM" id="CLU_019624_4_1_12"/>
<dbReference type="OrthoDB" id="9805918at2"/>
<dbReference type="Proteomes" id="UP000005216">
    <property type="component" value="Chromosome"/>
</dbReference>
<dbReference type="GO" id="GO:0005829">
    <property type="term" value="C:cytosol"/>
    <property type="evidence" value="ECO:0007669"/>
    <property type="project" value="TreeGrafter"/>
</dbReference>
<dbReference type="GO" id="GO:0005525">
    <property type="term" value="F:GTP binding"/>
    <property type="evidence" value="ECO:0007669"/>
    <property type="project" value="UniProtKB-UniRule"/>
</dbReference>
<dbReference type="GO" id="GO:0003924">
    <property type="term" value="F:GTPase activity"/>
    <property type="evidence" value="ECO:0007669"/>
    <property type="project" value="UniProtKB-UniRule"/>
</dbReference>
<dbReference type="GO" id="GO:0046872">
    <property type="term" value="F:metal ion binding"/>
    <property type="evidence" value="ECO:0007669"/>
    <property type="project" value="UniProtKB-KW"/>
</dbReference>
<dbReference type="GO" id="GO:0030488">
    <property type="term" value="P:tRNA methylation"/>
    <property type="evidence" value="ECO:0007669"/>
    <property type="project" value="TreeGrafter"/>
</dbReference>
<dbReference type="GO" id="GO:0002098">
    <property type="term" value="P:tRNA wobble uridine modification"/>
    <property type="evidence" value="ECO:0007669"/>
    <property type="project" value="TreeGrafter"/>
</dbReference>
<dbReference type="CDD" id="cd04164">
    <property type="entry name" value="trmE"/>
    <property type="match status" value="1"/>
</dbReference>
<dbReference type="CDD" id="cd14858">
    <property type="entry name" value="TrmE_N"/>
    <property type="match status" value="1"/>
</dbReference>
<dbReference type="Gene3D" id="3.40.50.300">
    <property type="entry name" value="P-loop containing nucleotide triphosphate hydrolases"/>
    <property type="match status" value="1"/>
</dbReference>
<dbReference type="Gene3D" id="3.30.1360.120">
    <property type="entry name" value="Probable tRNA modification gtpase trme, domain 1"/>
    <property type="match status" value="1"/>
</dbReference>
<dbReference type="Gene3D" id="1.20.120.430">
    <property type="entry name" value="tRNA modification GTPase MnmE domain 2"/>
    <property type="match status" value="1"/>
</dbReference>
<dbReference type="HAMAP" id="MF_00379">
    <property type="entry name" value="GTPase_MnmE"/>
    <property type="match status" value="1"/>
</dbReference>
<dbReference type="InterPro" id="IPR031168">
    <property type="entry name" value="G_TrmE"/>
</dbReference>
<dbReference type="InterPro" id="IPR006073">
    <property type="entry name" value="GTP-bd"/>
</dbReference>
<dbReference type="InterPro" id="IPR018948">
    <property type="entry name" value="GTP-bd_TrmE_N"/>
</dbReference>
<dbReference type="InterPro" id="IPR004520">
    <property type="entry name" value="GTPase_MnmE"/>
</dbReference>
<dbReference type="InterPro" id="IPR027368">
    <property type="entry name" value="MnmE_dom2"/>
</dbReference>
<dbReference type="InterPro" id="IPR025867">
    <property type="entry name" value="MnmE_helical"/>
</dbReference>
<dbReference type="InterPro" id="IPR027417">
    <property type="entry name" value="P-loop_NTPase"/>
</dbReference>
<dbReference type="InterPro" id="IPR005225">
    <property type="entry name" value="Small_GTP-bd"/>
</dbReference>
<dbReference type="InterPro" id="IPR027266">
    <property type="entry name" value="TrmE/GcvT_dom1"/>
</dbReference>
<dbReference type="NCBIfam" id="TIGR00450">
    <property type="entry name" value="mnmE_trmE_thdF"/>
    <property type="match status" value="1"/>
</dbReference>
<dbReference type="NCBIfam" id="TIGR00231">
    <property type="entry name" value="small_GTP"/>
    <property type="match status" value="1"/>
</dbReference>
<dbReference type="PANTHER" id="PTHR42714">
    <property type="entry name" value="TRNA MODIFICATION GTPASE GTPBP3"/>
    <property type="match status" value="1"/>
</dbReference>
<dbReference type="PANTHER" id="PTHR42714:SF2">
    <property type="entry name" value="TRNA MODIFICATION GTPASE GTPBP3, MITOCHONDRIAL"/>
    <property type="match status" value="1"/>
</dbReference>
<dbReference type="Pfam" id="PF01926">
    <property type="entry name" value="MMR_HSR1"/>
    <property type="match status" value="1"/>
</dbReference>
<dbReference type="Pfam" id="PF12631">
    <property type="entry name" value="MnmE_helical"/>
    <property type="match status" value="1"/>
</dbReference>
<dbReference type="Pfam" id="PF10396">
    <property type="entry name" value="TrmE_N"/>
    <property type="match status" value="1"/>
</dbReference>
<dbReference type="SUPFAM" id="SSF52540">
    <property type="entry name" value="P-loop containing nucleoside triphosphate hydrolases"/>
    <property type="match status" value="1"/>
</dbReference>
<dbReference type="SUPFAM" id="SSF116878">
    <property type="entry name" value="TrmE connector domain"/>
    <property type="match status" value="1"/>
</dbReference>
<dbReference type="PROSITE" id="PS51709">
    <property type="entry name" value="G_TRME"/>
    <property type="match status" value="1"/>
</dbReference>
<proteinExistence type="inferred from homology"/>
<evidence type="ECO:0000255" key="1">
    <source>
        <dbReference type="HAMAP-Rule" id="MF_00379"/>
    </source>
</evidence>
<gene>
    <name evidence="1" type="primary">mnmE</name>
    <name evidence="1" type="synonym">trmE</name>
    <name type="ordered locus">BAPKO_0181</name>
    <name type="ordered locus">BafPKo_0176</name>
</gene>
<reference key="1">
    <citation type="journal article" date="2006" name="BMC Genomics">
        <title>Comparative genome analysis: selection pressure on the Borrelia vls cassettes is essential for infectivity.</title>
        <authorList>
            <person name="Gloeckner G."/>
            <person name="Schulte-Spechtel U."/>
            <person name="Schilhabel M."/>
            <person name="Felder M."/>
            <person name="Suehnel J."/>
            <person name="Wilske B."/>
            <person name="Platzer M."/>
        </authorList>
    </citation>
    <scope>NUCLEOTIDE SEQUENCE [LARGE SCALE GENOMIC DNA]</scope>
    <source>
        <strain>PKo</strain>
    </source>
</reference>
<reference key="2">
    <citation type="journal article" date="2011" name="J. Bacteriol.">
        <title>Whole-genome sequences of two Borrelia afzelii and two Borrelia garinii Lyme disease agent isolates.</title>
        <authorList>
            <person name="Casjens S.R."/>
            <person name="Mongodin E.F."/>
            <person name="Qiu W.G."/>
            <person name="Dunn J.J."/>
            <person name="Luft B.J."/>
            <person name="Fraser-Liggett C.M."/>
            <person name="Schutzer S.E."/>
        </authorList>
    </citation>
    <scope>NUCLEOTIDE SEQUENCE [LARGE SCALE GENOMIC DNA]</scope>
    <source>
        <strain>PKo</strain>
    </source>
</reference>
<keyword id="KW-0963">Cytoplasm</keyword>
<keyword id="KW-0342">GTP-binding</keyword>
<keyword id="KW-0378">Hydrolase</keyword>
<keyword id="KW-0460">Magnesium</keyword>
<keyword id="KW-0479">Metal-binding</keyword>
<keyword id="KW-0547">Nucleotide-binding</keyword>
<keyword id="KW-0630">Potassium</keyword>
<keyword id="KW-0819">tRNA processing</keyword>
<protein>
    <recommendedName>
        <fullName evidence="1">tRNA modification GTPase MnmE</fullName>
        <ecNumber evidence="1">3.6.-.-</ecNumber>
    </recommendedName>
</protein>
<accession>Q0SNY5</accession>
<accession>G0IR23</accession>